<sequence length="248" mass="28070">MKIDVLTLFPEMFQSPFEESIFKRATDNNLVRLEIYNFRDFAHDKHHAVDDSPYGGGAGMLLKPEPLFEAVEDVLREDPTPAPIILLSPQGRSFNQEVARELAKHERLIIICGHYEGFDERVREHLATDEISIGDFVLTGGELAAMVVIDAVSRLIPGVLGSGESSQDDSHSNGLLEHPHYTRPPVFRGWGIPDVLLSGNHAQINRWRRKESLRRTLKRRPDMFEKIPLSKTDRKLVDEILAEENAQG</sequence>
<proteinExistence type="inferred from homology"/>
<dbReference type="EC" id="2.1.1.228" evidence="1"/>
<dbReference type="EMBL" id="AJ965256">
    <property type="protein sequence ID" value="CAI82512.1"/>
    <property type="molecule type" value="Genomic_DNA"/>
</dbReference>
<dbReference type="RefSeq" id="WP_011308870.1">
    <property type="nucleotide sequence ID" value="NC_007356.1"/>
</dbReference>
<dbReference type="SMR" id="Q3ZZA6"/>
<dbReference type="KEGG" id="deh:cbdbA279"/>
<dbReference type="HOGENOM" id="CLU_047363_0_1_0"/>
<dbReference type="Proteomes" id="UP000000433">
    <property type="component" value="Chromosome"/>
</dbReference>
<dbReference type="GO" id="GO:0005829">
    <property type="term" value="C:cytosol"/>
    <property type="evidence" value="ECO:0007669"/>
    <property type="project" value="TreeGrafter"/>
</dbReference>
<dbReference type="GO" id="GO:0052906">
    <property type="term" value="F:tRNA (guanine(37)-N1)-methyltransferase activity"/>
    <property type="evidence" value="ECO:0007669"/>
    <property type="project" value="UniProtKB-UniRule"/>
</dbReference>
<dbReference type="GO" id="GO:0002939">
    <property type="term" value="P:tRNA N1-guanine methylation"/>
    <property type="evidence" value="ECO:0007669"/>
    <property type="project" value="TreeGrafter"/>
</dbReference>
<dbReference type="CDD" id="cd18080">
    <property type="entry name" value="TrmD-like"/>
    <property type="match status" value="1"/>
</dbReference>
<dbReference type="FunFam" id="1.10.1270.20:FF:000001">
    <property type="entry name" value="tRNA (guanine-N(1)-)-methyltransferase"/>
    <property type="match status" value="1"/>
</dbReference>
<dbReference type="FunFam" id="3.40.1280.10:FF:000001">
    <property type="entry name" value="tRNA (guanine-N(1)-)-methyltransferase"/>
    <property type="match status" value="1"/>
</dbReference>
<dbReference type="Gene3D" id="3.40.1280.10">
    <property type="match status" value="1"/>
</dbReference>
<dbReference type="Gene3D" id="1.10.1270.20">
    <property type="entry name" value="tRNA(m1g37)methyltransferase, domain 2"/>
    <property type="match status" value="1"/>
</dbReference>
<dbReference type="HAMAP" id="MF_00605">
    <property type="entry name" value="TrmD"/>
    <property type="match status" value="1"/>
</dbReference>
<dbReference type="InterPro" id="IPR029028">
    <property type="entry name" value="Alpha/beta_knot_MTases"/>
</dbReference>
<dbReference type="InterPro" id="IPR023148">
    <property type="entry name" value="tRNA_m1G_MeTrfase_C_sf"/>
</dbReference>
<dbReference type="InterPro" id="IPR002649">
    <property type="entry name" value="tRNA_m1G_MeTrfase_TrmD"/>
</dbReference>
<dbReference type="InterPro" id="IPR029026">
    <property type="entry name" value="tRNA_m1G_MTases_N"/>
</dbReference>
<dbReference type="InterPro" id="IPR016009">
    <property type="entry name" value="tRNA_MeTrfase_TRMD/TRM10"/>
</dbReference>
<dbReference type="NCBIfam" id="NF000648">
    <property type="entry name" value="PRK00026.1"/>
    <property type="match status" value="1"/>
</dbReference>
<dbReference type="NCBIfam" id="TIGR00088">
    <property type="entry name" value="trmD"/>
    <property type="match status" value="1"/>
</dbReference>
<dbReference type="PANTHER" id="PTHR46417">
    <property type="entry name" value="TRNA (GUANINE-N(1)-)-METHYLTRANSFERASE"/>
    <property type="match status" value="1"/>
</dbReference>
<dbReference type="PANTHER" id="PTHR46417:SF1">
    <property type="entry name" value="TRNA (GUANINE-N(1)-)-METHYLTRANSFERASE"/>
    <property type="match status" value="1"/>
</dbReference>
<dbReference type="Pfam" id="PF01746">
    <property type="entry name" value="tRNA_m1G_MT"/>
    <property type="match status" value="1"/>
</dbReference>
<dbReference type="PIRSF" id="PIRSF000386">
    <property type="entry name" value="tRNA_mtase"/>
    <property type="match status" value="1"/>
</dbReference>
<dbReference type="SUPFAM" id="SSF75217">
    <property type="entry name" value="alpha/beta knot"/>
    <property type="match status" value="1"/>
</dbReference>
<name>TRMD_DEHMC</name>
<protein>
    <recommendedName>
        <fullName evidence="1">tRNA (guanine-N(1)-)-methyltransferase</fullName>
        <ecNumber evidence="1">2.1.1.228</ecNumber>
    </recommendedName>
    <alternativeName>
        <fullName evidence="1">M1G-methyltransferase</fullName>
    </alternativeName>
    <alternativeName>
        <fullName evidence="1">tRNA [GM37] methyltransferase</fullName>
    </alternativeName>
</protein>
<gene>
    <name evidence="1" type="primary">trmD</name>
    <name type="ordered locus">cbdbA279</name>
</gene>
<evidence type="ECO:0000255" key="1">
    <source>
        <dbReference type="HAMAP-Rule" id="MF_00605"/>
    </source>
</evidence>
<keyword id="KW-0963">Cytoplasm</keyword>
<keyword id="KW-0489">Methyltransferase</keyword>
<keyword id="KW-0949">S-adenosyl-L-methionine</keyword>
<keyword id="KW-0808">Transferase</keyword>
<keyword id="KW-0819">tRNA processing</keyword>
<reference key="1">
    <citation type="journal article" date="2005" name="Nat. Biotechnol.">
        <title>Genome sequence of the chlorinated compound-respiring bacterium Dehalococcoides species strain CBDB1.</title>
        <authorList>
            <person name="Kube M."/>
            <person name="Beck A."/>
            <person name="Zinder S.H."/>
            <person name="Kuhl H."/>
            <person name="Reinhardt R."/>
            <person name="Adrian L."/>
        </authorList>
    </citation>
    <scope>NUCLEOTIDE SEQUENCE [LARGE SCALE GENOMIC DNA]</scope>
    <source>
        <strain>CBDB1</strain>
    </source>
</reference>
<accession>Q3ZZA6</accession>
<feature type="chain" id="PRO_0000257412" description="tRNA (guanine-N(1)-)-methyltransferase">
    <location>
        <begin position="1"/>
        <end position="248"/>
    </location>
</feature>
<feature type="binding site" evidence="1">
    <location>
        <position position="113"/>
    </location>
    <ligand>
        <name>S-adenosyl-L-methionine</name>
        <dbReference type="ChEBI" id="CHEBI:59789"/>
    </ligand>
</feature>
<feature type="binding site" evidence="1">
    <location>
        <begin position="133"/>
        <end position="138"/>
    </location>
    <ligand>
        <name>S-adenosyl-L-methionine</name>
        <dbReference type="ChEBI" id="CHEBI:59789"/>
    </ligand>
</feature>
<organism>
    <name type="scientific">Dehalococcoides mccartyi (strain CBDB1)</name>
    <dbReference type="NCBI Taxonomy" id="255470"/>
    <lineage>
        <taxon>Bacteria</taxon>
        <taxon>Bacillati</taxon>
        <taxon>Chloroflexota</taxon>
        <taxon>Dehalococcoidia</taxon>
        <taxon>Dehalococcoidales</taxon>
        <taxon>Dehalococcoidaceae</taxon>
        <taxon>Dehalococcoides</taxon>
    </lineage>
</organism>
<comment type="function">
    <text evidence="1">Specifically methylates guanosine-37 in various tRNAs.</text>
</comment>
<comment type="catalytic activity">
    <reaction evidence="1">
        <text>guanosine(37) in tRNA + S-adenosyl-L-methionine = N(1)-methylguanosine(37) in tRNA + S-adenosyl-L-homocysteine + H(+)</text>
        <dbReference type="Rhea" id="RHEA:36899"/>
        <dbReference type="Rhea" id="RHEA-COMP:10145"/>
        <dbReference type="Rhea" id="RHEA-COMP:10147"/>
        <dbReference type="ChEBI" id="CHEBI:15378"/>
        <dbReference type="ChEBI" id="CHEBI:57856"/>
        <dbReference type="ChEBI" id="CHEBI:59789"/>
        <dbReference type="ChEBI" id="CHEBI:73542"/>
        <dbReference type="ChEBI" id="CHEBI:74269"/>
        <dbReference type="EC" id="2.1.1.228"/>
    </reaction>
</comment>
<comment type="subunit">
    <text evidence="1">Homodimer.</text>
</comment>
<comment type="subcellular location">
    <subcellularLocation>
        <location evidence="1">Cytoplasm</location>
    </subcellularLocation>
</comment>
<comment type="similarity">
    <text evidence="1">Belongs to the RNA methyltransferase TrmD family.</text>
</comment>